<feature type="chain" id="PRO_1000051781" description="Small ribosomal subunit protein uS8">
    <location>
        <begin position="1"/>
        <end position="130"/>
    </location>
</feature>
<evidence type="ECO:0000255" key="1">
    <source>
        <dbReference type="HAMAP-Rule" id="MF_01302"/>
    </source>
</evidence>
<evidence type="ECO:0000305" key="2"/>
<protein>
    <recommendedName>
        <fullName evidence="1">Small ribosomal subunit protein uS8</fullName>
    </recommendedName>
    <alternativeName>
        <fullName evidence="2">30S ribosomal protein S8</fullName>
    </alternativeName>
</protein>
<reference key="1">
    <citation type="journal article" date="2010" name="PLoS ONE">
        <title>Genome sequence of Cronobacter sakazakii BAA-894 and comparative genomic hybridization analysis with other Cronobacter species.</title>
        <authorList>
            <person name="Kucerova E."/>
            <person name="Clifton S.W."/>
            <person name="Xia X.Q."/>
            <person name="Long F."/>
            <person name="Porwollik S."/>
            <person name="Fulton L."/>
            <person name="Fronick C."/>
            <person name="Minx P."/>
            <person name="Kyung K."/>
            <person name="Warren W."/>
            <person name="Fulton R."/>
            <person name="Feng D."/>
            <person name="Wollam A."/>
            <person name="Shah N."/>
            <person name="Bhonagiri V."/>
            <person name="Nash W.E."/>
            <person name="Hallsworth-Pepin K."/>
            <person name="Wilson R.K."/>
            <person name="McClelland M."/>
            <person name="Forsythe S.J."/>
        </authorList>
    </citation>
    <scope>NUCLEOTIDE SEQUENCE [LARGE SCALE GENOMIC DNA]</scope>
    <source>
        <strain>ATCC BAA-894</strain>
    </source>
</reference>
<proteinExistence type="inferred from homology"/>
<keyword id="KW-1185">Reference proteome</keyword>
<keyword id="KW-0687">Ribonucleoprotein</keyword>
<keyword id="KW-0689">Ribosomal protein</keyword>
<keyword id="KW-0694">RNA-binding</keyword>
<keyword id="KW-0699">rRNA-binding</keyword>
<accession>A7MPG4</accession>
<comment type="function">
    <text evidence="1">One of the primary rRNA binding proteins, it binds directly to 16S rRNA central domain where it helps coordinate assembly of the platform of the 30S subunit.</text>
</comment>
<comment type="subunit">
    <text evidence="1">Part of the 30S ribosomal subunit. Contacts proteins S5 and S12.</text>
</comment>
<comment type="similarity">
    <text evidence="1">Belongs to the universal ribosomal protein uS8 family.</text>
</comment>
<sequence>MSMQDPIADMLTRIRNGQAANKAAVTMPSSKLKVAIANVLKEEGFIEDFKVEGDTKPELELTLKYFQGKAVVESIQRVSRPGLRIYKKKDELPKVMAGLGIAVISTSKGVMTDRAARQAGLGGEIICYVA</sequence>
<organism>
    <name type="scientific">Cronobacter sakazakii (strain ATCC BAA-894)</name>
    <name type="common">Enterobacter sakazakii</name>
    <dbReference type="NCBI Taxonomy" id="290339"/>
    <lineage>
        <taxon>Bacteria</taxon>
        <taxon>Pseudomonadati</taxon>
        <taxon>Pseudomonadota</taxon>
        <taxon>Gammaproteobacteria</taxon>
        <taxon>Enterobacterales</taxon>
        <taxon>Enterobacteriaceae</taxon>
        <taxon>Cronobacter</taxon>
    </lineage>
</organism>
<gene>
    <name evidence="1" type="primary">rpsH</name>
    <name type="ordered locus">ESA_00020</name>
</gene>
<name>RS8_CROS8</name>
<dbReference type="EMBL" id="CP000783">
    <property type="protein sequence ID" value="ABU75329.1"/>
    <property type="molecule type" value="Genomic_DNA"/>
</dbReference>
<dbReference type="RefSeq" id="WP_004388615.1">
    <property type="nucleotide sequence ID" value="NC_009778.1"/>
</dbReference>
<dbReference type="SMR" id="A7MPG4"/>
<dbReference type="GeneID" id="56733015"/>
<dbReference type="KEGG" id="esa:ESA_00020"/>
<dbReference type="HOGENOM" id="CLU_098428_0_0_6"/>
<dbReference type="Proteomes" id="UP000000260">
    <property type="component" value="Chromosome"/>
</dbReference>
<dbReference type="GO" id="GO:1990904">
    <property type="term" value="C:ribonucleoprotein complex"/>
    <property type="evidence" value="ECO:0007669"/>
    <property type="project" value="UniProtKB-KW"/>
</dbReference>
<dbReference type="GO" id="GO:0005840">
    <property type="term" value="C:ribosome"/>
    <property type="evidence" value="ECO:0007669"/>
    <property type="project" value="UniProtKB-KW"/>
</dbReference>
<dbReference type="GO" id="GO:0019843">
    <property type="term" value="F:rRNA binding"/>
    <property type="evidence" value="ECO:0007669"/>
    <property type="project" value="UniProtKB-UniRule"/>
</dbReference>
<dbReference type="GO" id="GO:0003735">
    <property type="term" value="F:structural constituent of ribosome"/>
    <property type="evidence" value="ECO:0007669"/>
    <property type="project" value="InterPro"/>
</dbReference>
<dbReference type="GO" id="GO:0006412">
    <property type="term" value="P:translation"/>
    <property type="evidence" value="ECO:0007669"/>
    <property type="project" value="UniProtKB-UniRule"/>
</dbReference>
<dbReference type="FunFam" id="3.30.1370.30:FF:000003">
    <property type="entry name" value="30S ribosomal protein S8"/>
    <property type="match status" value="1"/>
</dbReference>
<dbReference type="FunFam" id="3.30.1490.10:FF:000001">
    <property type="entry name" value="30S ribosomal protein S8"/>
    <property type="match status" value="1"/>
</dbReference>
<dbReference type="Gene3D" id="3.30.1370.30">
    <property type="match status" value="1"/>
</dbReference>
<dbReference type="Gene3D" id="3.30.1490.10">
    <property type="match status" value="1"/>
</dbReference>
<dbReference type="HAMAP" id="MF_01302_B">
    <property type="entry name" value="Ribosomal_uS8_B"/>
    <property type="match status" value="1"/>
</dbReference>
<dbReference type="InterPro" id="IPR000630">
    <property type="entry name" value="Ribosomal_uS8"/>
</dbReference>
<dbReference type="InterPro" id="IPR047863">
    <property type="entry name" value="Ribosomal_uS8_CS"/>
</dbReference>
<dbReference type="InterPro" id="IPR035987">
    <property type="entry name" value="Ribosomal_uS8_sf"/>
</dbReference>
<dbReference type="NCBIfam" id="NF001109">
    <property type="entry name" value="PRK00136.1"/>
    <property type="match status" value="1"/>
</dbReference>
<dbReference type="PANTHER" id="PTHR11758">
    <property type="entry name" value="40S RIBOSOMAL PROTEIN S15A"/>
    <property type="match status" value="1"/>
</dbReference>
<dbReference type="Pfam" id="PF00410">
    <property type="entry name" value="Ribosomal_S8"/>
    <property type="match status" value="1"/>
</dbReference>
<dbReference type="SUPFAM" id="SSF56047">
    <property type="entry name" value="Ribosomal protein S8"/>
    <property type="match status" value="1"/>
</dbReference>
<dbReference type="PROSITE" id="PS00053">
    <property type="entry name" value="RIBOSOMAL_S8"/>
    <property type="match status" value="1"/>
</dbReference>